<accession>Q817F2</accession>
<proteinExistence type="inferred from homology"/>
<organism>
    <name type="scientific">Bacillus cereus (strain ATCC 14579 / DSM 31 / CCUG 7414 / JCM 2152 / NBRC 15305 / NCIMB 9373 / NCTC 2599 / NRRL B-3711)</name>
    <dbReference type="NCBI Taxonomy" id="226900"/>
    <lineage>
        <taxon>Bacteria</taxon>
        <taxon>Bacillati</taxon>
        <taxon>Bacillota</taxon>
        <taxon>Bacilli</taxon>
        <taxon>Bacillales</taxon>
        <taxon>Bacillaceae</taxon>
        <taxon>Bacillus</taxon>
        <taxon>Bacillus cereus group</taxon>
    </lineage>
</organism>
<sequence>MAELEFEKPVVELRNKIRELKDYTKNSQMDFSEEIRILEEKLENLEEDIYGNLKVWDRVQIARHAERPTTLDYIEHLFTDFFECHGDRLFGDDAAIVGGIAKYKGMPVTVIGHQRGKDTKENIRRNFGMPHPEGYRKALRLMKQAEKFNRPIICFIDTKGAYPGKAAEERGQSEAIARNLFEMAGLTVPVICIVIGEGGSGGALGLGVGDYIHMLENSTYSVITPEGAAAILWKDAGKAKEAAEAMKITAADLKELGVIDEIIPEARGGAHRNILKQSENIDLMIQKTFQQLNGISKDELIEKRYEKYMKIGQVSFSNASIWIK</sequence>
<reference key="1">
    <citation type="journal article" date="2003" name="Nature">
        <title>Genome sequence of Bacillus cereus and comparative analysis with Bacillus anthracis.</title>
        <authorList>
            <person name="Ivanova N."/>
            <person name="Sorokin A."/>
            <person name="Anderson I."/>
            <person name="Galleron N."/>
            <person name="Candelon B."/>
            <person name="Kapatral V."/>
            <person name="Bhattacharyya A."/>
            <person name="Reznik G."/>
            <person name="Mikhailova N."/>
            <person name="Lapidus A."/>
            <person name="Chu L."/>
            <person name="Mazur M."/>
            <person name="Goltsman E."/>
            <person name="Larsen N."/>
            <person name="D'Souza M."/>
            <person name="Walunas T."/>
            <person name="Grechkin Y."/>
            <person name="Pusch G."/>
            <person name="Haselkorn R."/>
            <person name="Fonstein M."/>
            <person name="Ehrlich S.D."/>
            <person name="Overbeek R."/>
            <person name="Kyrpides N.C."/>
        </authorList>
    </citation>
    <scope>NUCLEOTIDE SEQUENCE [LARGE SCALE GENOMIC DNA]</scope>
    <source>
        <strain>ATCC 14579 / DSM 31 / CCUG 7414 / JCM 2152 / NBRC 15305 / NCIMB 9373 / NCTC 2599 / NRRL B-3711</strain>
    </source>
</reference>
<gene>
    <name evidence="1" type="primary">accA</name>
    <name type="ordered locus">BC_4601</name>
</gene>
<protein>
    <recommendedName>
        <fullName evidence="1">Acetyl-coenzyme A carboxylase carboxyl transferase subunit alpha</fullName>
        <shortName evidence="1">ACCase subunit alpha</shortName>
        <shortName evidence="1">Acetyl-CoA carboxylase carboxyltransferase subunit alpha</shortName>
        <ecNumber evidence="1">2.1.3.15</ecNumber>
    </recommendedName>
</protein>
<name>ACCA_BACCR</name>
<comment type="function">
    <text evidence="1">Component of the acetyl coenzyme A carboxylase (ACC) complex. First, biotin carboxylase catalyzes the carboxylation of biotin on its carrier protein (BCCP) and then the CO(2) group is transferred by the carboxyltransferase to acetyl-CoA to form malonyl-CoA.</text>
</comment>
<comment type="catalytic activity">
    <reaction evidence="1">
        <text>N(6)-carboxybiotinyl-L-lysyl-[protein] + acetyl-CoA = N(6)-biotinyl-L-lysyl-[protein] + malonyl-CoA</text>
        <dbReference type="Rhea" id="RHEA:54728"/>
        <dbReference type="Rhea" id="RHEA-COMP:10505"/>
        <dbReference type="Rhea" id="RHEA-COMP:10506"/>
        <dbReference type="ChEBI" id="CHEBI:57288"/>
        <dbReference type="ChEBI" id="CHEBI:57384"/>
        <dbReference type="ChEBI" id="CHEBI:83144"/>
        <dbReference type="ChEBI" id="CHEBI:83145"/>
        <dbReference type="EC" id="2.1.3.15"/>
    </reaction>
</comment>
<comment type="pathway">
    <text evidence="1">Lipid metabolism; malonyl-CoA biosynthesis; malonyl-CoA from acetyl-CoA: step 1/1.</text>
</comment>
<comment type="subunit">
    <text evidence="1">Acetyl-CoA carboxylase is a heterohexamer composed of biotin carboxyl carrier protein (AccB), biotin carboxylase (AccC) and two subunits each of ACCase subunit alpha (AccA) and ACCase subunit beta (AccD).</text>
</comment>
<comment type="subcellular location">
    <subcellularLocation>
        <location evidence="1">Cytoplasm</location>
    </subcellularLocation>
</comment>
<comment type="similarity">
    <text evidence="1">Belongs to the AccA family.</text>
</comment>
<dbReference type="EC" id="2.1.3.15" evidence="1"/>
<dbReference type="EMBL" id="AE016877">
    <property type="protein sequence ID" value="AAP11508.1"/>
    <property type="molecule type" value="Genomic_DNA"/>
</dbReference>
<dbReference type="RefSeq" id="NP_834307.1">
    <property type="nucleotide sequence ID" value="NC_004722.1"/>
</dbReference>
<dbReference type="RefSeq" id="WP_000818803.1">
    <property type="nucleotide sequence ID" value="NC_004722.1"/>
</dbReference>
<dbReference type="SMR" id="Q817F2"/>
<dbReference type="STRING" id="226900.BC_4601"/>
<dbReference type="KEGG" id="bce:BC4601"/>
<dbReference type="PATRIC" id="fig|226900.8.peg.4762"/>
<dbReference type="HOGENOM" id="CLU_015486_0_2_9"/>
<dbReference type="OrthoDB" id="9808023at2"/>
<dbReference type="UniPathway" id="UPA00655">
    <property type="reaction ID" value="UER00711"/>
</dbReference>
<dbReference type="Proteomes" id="UP000001417">
    <property type="component" value="Chromosome"/>
</dbReference>
<dbReference type="GO" id="GO:0009317">
    <property type="term" value="C:acetyl-CoA carboxylase complex"/>
    <property type="evidence" value="ECO:0007669"/>
    <property type="project" value="InterPro"/>
</dbReference>
<dbReference type="GO" id="GO:0003989">
    <property type="term" value="F:acetyl-CoA carboxylase activity"/>
    <property type="evidence" value="ECO:0007669"/>
    <property type="project" value="InterPro"/>
</dbReference>
<dbReference type="GO" id="GO:0005524">
    <property type="term" value="F:ATP binding"/>
    <property type="evidence" value="ECO:0007669"/>
    <property type="project" value="UniProtKB-KW"/>
</dbReference>
<dbReference type="GO" id="GO:0016743">
    <property type="term" value="F:carboxyl- or carbamoyltransferase activity"/>
    <property type="evidence" value="ECO:0007669"/>
    <property type="project" value="UniProtKB-UniRule"/>
</dbReference>
<dbReference type="GO" id="GO:0006633">
    <property type="term" value="P:fatty acid biosynthetic process"/>
    <property type="evidence" value="ECO:0007669"/>
    <property type="project" value="UniProtKB-KW"/>
</dbReference>
<dbReference type="GO" id="GO:2001295">
    <property type="term" value="P:malonyl-CoA biosynthetic process"/>
    <property type="evidence" value="ECO:0007669"/>
    <property type="project" value="UniProtKB-UniRule"/>
</dbReference>
<dbReference type="Gene3D" id="3.90.226.10">
    <property type="entry name" value="2-enoyl-CoA Hydratase, Chain A, domain 1"/>
    <property type="match status" value="1"/>
</dbReference>
<dbReference type="HAMAP" id="MF_00823">
    <property type="entry name" value="AcetylCoA_CT_alpha"/>
    <property type="match status" value="1"/>
</dbReference>
<dbReference type="InterPro" id="IPR001095">
    <property type="entry name" value="Acetyl_CoA_COase_a_su"/>
</dbReference>
<dbReference type="InterPro" id="IPR029045">
    <property type="entry name" value="ClpP/crotonase-like_dom_sf"/>
</dbReference>
<dbReference type="InterPro" id="IPR011763">
    <property type="entry name" value="COA_CT_C"/>
</dbReference>
<dbReference type="NCBIfam" id="TIGR00513">
    <property type="entry name" value="accA"/>
    <property type="match status" value="1"/>
</dbReference>
<dbReference type="NCBIfam" id="NF041504">
    <property type="entry name" value="AccA_sub"/>
    <property type="match status" value="1"/>
</dbReference>
<dbReference type="NCBIfam" id="NF004344">
    <property type="entry name" value="PRK05724.1"/>
    <property type="match status" value="1"/>
</dbReference>
<dbReference type="PANTHER" id="PTHR42853">
    <property type="entry name" value="ACETYL-COENZYME A CARBOXYLASE CARBOXYL TRANSFERASE SUBUNIT ALPHA"/>
    <property type="match status" value="1"/>
</dbReference>
<dbReference type="PANTHER" id="PTHR42853:SF3">
    <property type="entry name" value="ACETYL-COENZYME A CARBOXYLASE CARBOXYL TRANSFERASE SUBUNIT ALPHA, CHLOROPLASTIC"/>
    <property type="match status" value="1"/>
</dbReference>
<dbReference type="Pfam" id="PF03255">
    <property type="entry name" value="ACCA"/>
    <property type="match status" value="1"/>
</dbReference>
<dbReference type="PRINTS" id="PR01069">
    <property type="entry name" value="ACCCTRFRASEA"/>
</dbReference>
<dbReference type="SUPFAM" id="SSF52096">
    <property type="entry name" value="ClpP/crotonase"/>
    <property type="match status" value="1"/>
</dbReference>
<dbReference type="PROSITE" id="PS50989">
    <property type="entry name" value="COA_CT_CTER"/>
    <property type="match status" value="1"/>
</dbReference>
<feature type="chain" id="PRO_0000223730" description="Acetyl-coenzyme A carboxylase carboxyl transferase subunit alpha">
    <location>
        <begin position="1"/>
        <end position="324"/>
    </location>
</feature>
<feature type="domain" description="CoA carboxyltransferase C-terminal" evidence="2">
    <location>
        <begin position="37"/>
        <end position="291"/>
    </location>
</feature>
<keyword id="KW-0067">ATP-binding</keyword>
<keyword id="KW-0963">Cytoplasm</keyword>
<keyword id="KW-0275">Fatty acid biosynthesis</keyword>
<keyword id="KW-0276">Fatty acid metabolism</keyword>
<keyword id="KW-0444">Lipid biosynthesis</keyword>
<keyword id="KW-0443">Lipid metabolism</keyword>
<keyword id="KW-0547">Nucleotide-binding</keyword>
<keyword id="KW-1185">Reference proteome</keyword>
<keyword id="KW-0808">Transferase</keyword>
<evidence type="ECO:0000255" key="1">
    <source>
        <dbReference type="HAMAP-Rule" id="MF_00823"/>
    </source>
</evidence>
<evidence type="ECO:0000255" key="2">
    <source>
        <dbReference type="PROSITE-ProRule" id="PRU01137"/>
    </source>
</evidence>